<keyword id="KW-0012">Acyltransferase</keyword>
<keyword id="KW-0749">Sporulation</keyword>
<keyword id="KW-0808">Transferase</keyword>
<accession>C1EPX7</accession>
<organism>
    <name type="scientific">Bacillus cereus (strain 03BB102)</name>
    <dbReference type="NCBI Taxonomy" id="572264"/>
    <lineage>
        <taxon>Bacteria</taxon>
        <taxon>Bacillati</taxon>
        <taxon>Bacillota</taxon>
        <taxon>Bacilli</taxon>
        <taxon>Bacillales</taxon>
        <taxon>Bacillaceae</taxon>
        <taxon>Bacillus</taxon>
        <taxon>Bacillus cereus group</taxon>
    </lineage>
</organism>
<evidence type="ECO:0000255" key="1">
    <source>
        <dbReference type="HAMAP-Rule" id="MF_00727"/>
    </source>
</evidence>
<sequence>MIVIGRSIVHPYITNEYEPFAAEKQQILSIMAGNQEIYSFRTSDELSFDLNLRVNIITSALELFQSGFQFRTFQQSFCNPQYWKRTSLGGFELLPNIPPSIAIQDIFKNGKLYGTECATAMIIIFYKALLSLYEEETFNRLFANLLLYTWDYDQDLKLITKTGGDLVPGDLVYFKNPQVNPATIEWQGENTIYLGNFFFYGHGVGVKTKEEIIYALNERRVPYAFISAFLTDTITRIDSRLMSYHASPSTPQTSIGFIPIRDDAIVATVGNTTTVY</sequence>
<gene>
    <name evidence="1" type="primary">tgl</name>
    <name type="ordered locus">BCA_4068</name>
</gene>
<name>TGL_BACC3</name>
<proteinExistence type="inferred from homology"/>
<feature type="chain" id="PRO_1000197962" description="Protein-glutamine gamma-glutamyltransferase">
    <location>
        <begin position="1"/>
        <end position="276"/>
    </location>
</feature>
<dbReference type="EC" id="2.3.2.13" evidence="1"/>
<dbReference type="EMBL" id="CP001407">
    <property type="protein sequence ID" value="ACO30346.1"/>
    <property type="molecule type" value="Genomic_DNA"/>
</dbReference>
<dbReference type="RefSeq" id="WP_000635324.1">
    <property type="nucleotide sequence ID" value="NZ_CP009318.1"/>
</dbReference>
<dbReference type="SMR" id="C1EPX7"/>
<dbReference type="KEGG" id="bcx:BCA_4068"/>
<dbReference type="PATRIC" id="fig|572264.18.peg.4020"/>
<dbReference type="Proteomes" id="UP000002210">
    <property type="component" value="Chromosome"/>
</dbReference>
<dbReference type="GO" id="GO:0003810">
    <property type="term" value="F:protein-glutamine gamma-glutamyltransferase activity"/>
    <property type="evidence" value="ECO:0007669"/>
    <property type="project" value="UniProtKB-UniRule"/>
</dbReference>
<dbReference type="GO" id="GO:0030435">
    <property type="term" value="P:sporulation resulting in formation of a cellular spore"/>
    <property type="evidence" value="ECO:0007669"/>
    <property type="project" value="UniProtKB-UniRule"/>
</dbReference>
<dbReference type="HAMAP" id="MF_00727">
    <property type="entry name" value="Tgl"/>
    <property type="match status" value="1"/>
</dbReference>
<dbReference type="InterPro" id="IPR020916">
    <property type="entry name" value="Gln_gamma-glutamylTfrase_bac"/>
</dbReference>
<dbReference type="NCBIfam" id="NF002869">
    <property type="entry name" value="PRK03187.1"/>
    <property type="match status" value="1"/>
</dbReference>
<dbReference type="Pfam" id="PF20085">
    <property type="entry name" value="TGL"/>
    <property type="match status" value="1"/>
</dbReference>
<protein>
    <recommendedName>
        <fullName evidence="1">Protein-glutamine gamma-glutamyltransferase</fullName>
        <ecNumber evidence="1">2.3.2.13</ecNumber>
    </recommendedName>
    <alternativeName>
        <fullName evidence="1">Transglutaminase</fullName>
        <shortName evidence="1">TGase</shortName>
    </alternativeName>
</protein>
<reference key="1">
    <citation type="submission" date="2009-02" db="EMBL/GenBank/DDBJ databases">
        <title>Genome sequence of Bacillus cereus 03BB102.</title>
        <authorList>
            <person name="Dodson R.J."/>
            <person name="Jackson P."/>
            <person name="Munk A.C."/>
            <person name="Brettin T."/>
            <person name="Bruce D."/>
            <person name="Detter C."/>
            <person name="Tapia R."/>
            <person name="Han C."/>
            <person name="Sutton G."/>
            <person name="Sims D."/>
        </authorList>
    </citation>
    <scope>NUCLEOTIDE SEQUENCE [LARGE SCALE GENOMIC DNA]</scope>
    <source>
        <strain>03BB102</strain>
    </source>
</reference>
<comment type="function">
    <text evidence="1">Probably plays a role in the assembly of the spore coat proteins by catalyzing epsilon-(gamma-glutamyl)lysine cross-links.</text>
</comment>
<comment type="catalytic activity">
    <reaction evidence="1">
        <text>L-glutaminyl-[protein] + L-lysyl-[protein] = [protein]-L-lysyl-N(6)-5-L-glutamyl-[protein] + NH4(+)</text>
        <dbReference type="Rhea" id="RHEA:54816"/>
        <dbReference type="Rhea" id="RHEA-COMP:9752"/>
        <dbReference type="Rhea" id="RHEA-COMP:10207"/>
        <dbReference type="Rhea" id="RHEA-COMP:14005"/>
        <dbReference type="ChEBI" id="CHEBI:28938"/>
        <dbReference type="ChEBI" id="CHEBI:29969"/>
        <dbReference type="ChEBI" id="CHEBI:30011"/>
        <dbReference type="ChEBI" id="CHEBI:138370"/>
        <dbReference type="EC" id="2.3.2.13"/>
    </reaction>
</comment>
<comment type="similarity">
    <text evidence="1">Belongs to the bacillus TGase family.</text>
</comment>